<accession>P35334</accession>
<gene>
    <name type="primary">PGIP1</name>
</gene>
<name>PGIP1_PHAVU</name>
<organism>
    <name type="scientific">Phaseolus vulgaris</name>
    <name type="common">Kidney bean</name>
    <name type="synonym">French bean</name>
    <dbReference type="NCBI Taxonomy" id="3885"/>
    <lineage>
        <taxon>Eukaryota</taxon>
        <taxon>Viridiplantae</taxon>
        <taxon>Streptophyta</taxon>
        <taxon>Embryophyta</taxon>
        <taxon>Tracheophyta</taxon>
        <taxon>Spermatophyta</taxon>
        <taxon>Magnoliopsida</taxon>
        <taxon>eudicotyledons</taxon>
        <taxon>Gunneridae</taxon>
        <taxon>Pentapetalae</taxon>
        <taxon>rosids</taxon>
        <taxon>fabids</taxon>
        <taxon>Fabales</taxon>
        <taxon>Fabaceae</taxon>
        <taxon>Papilionoideae</taxon>
        <taxon>50 kb inversion clade</taxon>
        <taxon>NPAAA clade</taxon>
        <taxon>indigoferoid/millettioid clade</taxon>
        <taxon>Phaseoleae</taxon>
        <taxon>Phaseolus</taxon>
    </lineage>
</organism>
<reference key="1">
    <citation type="journal article" date="1992" name="Plant J.">
        <title>Cloning and characterization of the gene encoding the endopolygalacturonase-inhibiting protein (PGIP) of Phaseolus vulgaris L.</title>
        <authorList>
            <person name="Toubart P."/>
            <person name="Desiderio A."/>
            <person name="Salvi G."/>
            <person name="Cervone F."/>
            <person name="Daroda L."/>
            <person name="de Lorenzo G."/>
            <person name="Bergmann C."/>
            <person name="Darvill A.G."/>
            <person name="Albersheim P."/>
        </authorList>
    </citation>
    <scope>NUCLEOTIDE SEQUENCE [GENOMIC DNA]</scope>
    <scope>PROTEIN SEQUENCE OF 30-49; 190-201; 204-208; 255-259 AND 285-297</scope>
    <scope>SIGNAL</scope>
    <source>
        <strain>cv. Saxa</strain>
        <tissue>Hypocotyl</tissue>
    </source>
</reference>
<reference key="2">
    <citation type="journal article" date="1999" name="EMBO J.">
        <title>The specificity of polygalacturonase-inhibiting protein (PGIP): a single amino acid substitution in the solvent-exposed beta-strand/beta-turn region of the leucine-rich repeats (LRRs) confers a new recognition capability.</title>
        <authorList>
            <person name="Leckie F."/>
            <person name="Mattei B."/>
            <person name="Capodicasa C."/>
            <person name="Hemmings A."/>
            <person name="Nuss L."/>
            <person name="Aracri B."/>
            <person name="De Lorenzo G."/>
            <person name="Cervone F."/>
        </authorList>
    </citation>
    <scope>NUCLEOTIDE SEQUENCE</scope>
    <scope>FUNCTION</scope>
    <scope>MUTAGENESIS OF LYS-253</scope>
    <source>
        <strain>cv. Pinto</strain>
        <tissue>Hypocotyl</tissue>
    </source>
</reference>
<reference key="3">
    <citation type="journal article" date="1997" name="Mol. Plant Microbe Interact.">
        <title>Polygalacturonase-inhibiting proteins (PGIPs) with different specificities are expressed in Phaseolus vulgaris.</title>
        <authorList>
            <person name="Desiderio A."/>
            <person name="Aracri B."/>
            <person name="Leckie F."/>
            <person name="Mattei B."/>
            <person name="Salvi G."/>
            <person name="Tigelaar H."/>
            <person name="Van Roekel J.S."/>
            <person name="Baulcombe D.C."/>
            <person name="Melchers L.S."/>
            <person name="De Lorenzo G."/>
            <person name="Cervone F."/>
        </authorList>
    </citation>
    <scope>CHARACTERIZATION</scope>
</reference>
<evidence type="ECO:0000250" key="1">
    <source>
        <dbReference type="UniProtKB" id="P58822"/>
    </source>
</evidence>
<evidence type="ECO:0000255" key="2"/>
<evidence type="ECO:0000255" key="3">
    <source>
        <dbReference type="PROSITE-ProRule" id="PRU00498"/>
    </source>
</evidence>
<evidence type="ECO:0000269" key="4">
    <source>
    </source>
</evidence>
<evidence type="ECO:0000269" key="5">
    <source>
    </source>
</evidence>
<evidence type="ECO:0000269" key="6">
    <source>
    </source>
</evidence>
<evidence type="ECO:0000303" key="7">
    <source>
    </source>
</evidence>
<evidence type="ECO:0000305" key="8"/>
<feature type="signal peptide" evidence="5">
    <location>
        <begin position="1"/>
        <end position="29"/>
    </location>
</feature>
<feature type="chain" id="PRO_0000023885" description="Polygalacturonase inhibitor 1">
    <location>
        <begin position="30"/>
        <end position="342"/>
    </location>
</feature>
<feature type="repeat" description="LRR 1" evidence="2">
    <location>
        <begin position="82"/>
        <end position="107"/>
    </location>
</feature>
<feature type="repeat" description="LRR 2" evidence="2">
    <location>
        <begin position="108"/>
        <end position="132"/>
    </location>
</feature>
<feature type="repeat" description="LRR 3" evidence="2">
    <location>
        <begin position="133"/>
        <end position="156"/>
    </location>
</feature>
<feature type="repeat" description="LRR 4" evidence="2">
    <location>
        <begin position="157"/>
        <end position="180"/>
    </location>
</feature>
<feature type="repeat" description="LRR 5" evidence="2">
    <location>
        <begin position="181"/>
        <end position="205"/>
    </location>
</feature>
<feature type="repeat" description="LRR 6" evidence="2">
    <location>
        <begin position="206"/>
        <end position="228"/>
    </location>
</feature>
<feature type="repeat" description="LRR 7" evidence="2">
    <location>
        <begin position="229"/>
        <end position="252"/>
    </location>
</feature>
<feature type="repeat" description="LRR 8" evidence="2">
    <location>
        <begin position="253"/>
        <end position="275"/>
    </location>
</feature>
<feature type="repeat" description="LRR 9" evidence="2">
    <location>
        <begin position="276"/>
        <end position="299"/>
    </location>
</feature>
<feature type="repeat" description="LRR 10" evidence="2">
    <location>
        <begin position="300"/>
        <end position="319"/>
    </location>
</feature>
<feature type="glycosylation site" description="N-linked (GlcNAc...) asparagine" evidence="3">
    <location>
        <position position="64"/>
    </location>
</feature>
<feature type="glycosylation site" description="N-linked (GlcNAc...) asparagine" evidence="3">
    <location>
        <position position="141"/>
    </location>
</feature>
<feature type="glycosylation site" description="N-linked (GlcNAc...) asparagine" evidence="3">
    <location>
        <position position="303"/>
    </location>
</feature>
<feature type="disulfide bond" evidence="1">
    <location>
        <begin position="32"/>
        <end position="62"/>
    </location>
</feature>
<feature type="disulfide bond" evidence="1">
    <location>
        <begin position="63"/>
        <end position="72"/>
    </location>
</feature>
<feature type="disulfide bond" evidence="1">
    <location>
        <begin position="310"/>
        <end position="332"/>
    </location>
</feature>
<feature type="disulfide bond" evidence="1">
    <location>
        <begin position="334"/>
        <end position="341"/>
    </location>
</feature>
<feature type="mutagenesis site" description="Broader spectrum of action." evidence="4">
    <original>K</original>
    <variation>Q</variation>
    <location>
        <position position="253"/>
    </location>
</feature>
<protein>
    <recommendedName>
        <fullName>Polygalacturonase inhibitor 1</fullName>
    </recommendedName>
    <alternativeName>
        <fullName>Polygalacturonase-inhibiting protein 1</fullName>
        <shortName>PGIP-1</shortName>
    </alternativeName>
</protein>
<dbReference type="EMBL" id="X64769">
    <property type="protein sequence ID" value="CAA46016.1"/>
    <property type="molecule type" value="Genomic_DNA"/>
</dbReference>
<dbReference type="EMBL" id="A23205">
    <property type="protein sequence ID" value="CAA01664.1"/>
    <property type="molecule type" value="Unassigned_DNA"/>
</dbReference>
<dbReference type="PIR" id="S23764">
    <property type="entry name" value="S23764"/>
</dbReference>
<dbReference type="RefSeq" id="XP_007159023.1">
    <property type="nucleotide sequence ID" value="XM_007158961.1"/>
</dbReference>
<dbReference type="SMR" id="P35334"/>
<dbReference type="GlyCosmos" id="P35334">
    <property type="glycosylation" value="3 sites, No reported glycans"/>
</dbReference>
<dbReference type="EnsemblPlants" id="ESW31017">
    <property type="protein sequence ID" value="ESW31017"/>
    <property type="gene ID" value="PHAVU_002G201900g"/>
</dbReference>
<dbReference type="Gramene" id="ESW31017">
    <property type="protein sequence ID" value="ESW31017"/>
    <property type="gene ID" value="PHAVU_002G201900g"/>
</dbReference>
<dbReference type="eggNOG" id="ENOG502QRQP">
    <property type="taxonomic scope" value="Eukaryota"/>
</dbReference>
<dbReference type="OMA" id="AVNFTHF"/>
<dbReference type="OrthoDB" id="1350379at2759"/>
<dbReference type="GO" id="GO:0005576">
    <property type="term" value="C:extracellular region"/>
    <property type="evidence" value="ECO:0007669"/>
    <property type="project" value="UniProtKB-KW"/>
</dbReference>
<dbReference type="GO" id="GO:0016020">
    <property type="term" value="C:membrane"/>
    <property type="evidence" value="ECO:0007669"/>
    <property type="project" value="UniProtKB-SubCell"/>
</dbReference>
<dbReference type="GO" id="GO:0006952">
    <property type="term" value="P:defense response"/>
    <property type="evidence" value="ECO:0007669"/>
    <property type="project" value="UniProtKB-KW"/>
</dbReference>
<dbReference type="FunFam" id="3.80.10.10:FF:000400">
    <property type="entry name" value="Nuclear pore complex protein NUP107"/>
    <property type="match status" value="1"/>
</dbReference>
<dbReference type="Gene3D" id="3.80.10.10">
    <property type="entry name" value="Ribonuclease Inhibitor"/>
    <property type="match status" value="1"/>
</dbReference>
<dbReference type="InterPro" id="IPR001611">
    <property type="entry name" value="Leu-rich_rpt"/>
</dbReference>
<dbReference type="InterPro" id="IPR032675">
    <property type="entry name" value="LRR_dom_sf"/>
</dbReference>
<dbReference type="InterPro" id="IPR013210">
    <property type="entry name" value="LRR_N_plant-typ"/>
</dbReference>
<dbReference type="InterPro" id="IPR051848">
    <property type="entry name" value="PGIP"/>
</dbReference>
<dbReference type="PANTHER" id="PTHR48059:SF24">
    <property type="entry name" value="POLYGALACTURONASE INHIBITOR"/>
    <property type="match status" value="1"/>
</dbReference>
<dbReference type="PANTHER" id="PTHR48059">
    <property type="entry name" value="POLYGALACTURONASE INHIBITOR 1"/>
    <property type="match status" value="1"/>
</dbReference>
<dbReference type="Pfam" id="PF00560">
    <property type="entry name" value="LRR_1"/>
    <property type="match status" value="4"/>
</dbReference>
<dbReference type="Pfam" id="PF08263">
    <property type="entry name" value="LRRNT_2"/>
    <property type="match status" value="1"/>
</dbReference>
<dbReference type="SUPFAM" id="SSF52058">
    <property type="entry name" value="L domain-like"/>
    <property type="match status" value="1"/>
</dbReference>
<comment type="function">
    <text evidence="4 6">Inhibitor of fungal polygalacturonase. It is an important factor for plant resistance to phytopathogenic fungi. Substrate preference is polygalacturonase (PG) from A.niger &gt;&gt; PG of F.oxysporum, A.solani or B.cinerea. Not active on PG from F.moniliforme.</text>
</comment>
<comment type="subcellular location">
    <subcellularLocation>
        <location evidence="7">Secreted</location>
        <location evidence="7">Cell wall</location>
    </subcellularLocation>
    <subcellularLocation>
        <location>Membrane</location>
        <topology>Peripheral membrane protein</topology>
    </subcellularLocation>
</comment>
<comment type="miscellaneous">
    <text evidence="4">Mutation of Lys-253 confers the ability to inhibit the F.moniliforme PG.</text>
</comment>
<comment type="similarity">
    <text evidence="8">Belongs to the polygalacturonase-inhibiting protein family.</text>
</comment>
<comment type="caution">
    <text evidence="8">It is uncertain whether Met-1 or Met-10 is the initiator.</text>
</comment>
<keyword id="KW-0134">Cell wall</keyword>
<keyword id="KW-0903">Direct protein sequencing</keyword>
<keyword id="KW-1015">Disulfide bond</keyword>
<keyword id="KW-0325">Glycoprotein</keyword>
<keyword id="KW-0433">Leucine-rich repeat</keyword>
<keyword id="KW-0472">Membrane</keyword>
<keyword id="KW-0611">Plant defense</keyword>
<keyword id="KW-0677">Repeat</keyword>
<keyword id="KW-0964">Secreted</keyword>
<keyword id="KW-0732">Signal</keyword>
<sequence length="342" mass="37102">MTQFNIPVTMSSSLSIILVILVSLRTALSELCNPQDKQALLQIKKDLGNPTTLSSWLPTTDCCNRTWLGVLCDTDTQTYRVNNLDLSGHNLPKPYPIPSSLANLPYLNFLYIGGINNLVGPIPPAIAKLTQLHYLYITHTNVSGAIPDFLSQIKTLVTLDFSYNALSGTLPPSISSLPNLGGITFDGNRISGAIPDSYGSFSKLFTAMTISRNRLTGKIPPTFANLNLAFVDLSRNMLEGDASVLFGSDKNTKKIHLAKNSLAFDLGKVGLSKNLNGLDLRNNRIYGTLPQGLTQLKFLQSLNVSFNNLCGEIPQGGNLKRFDVSSYANNKCLCGSPLPSCT</sequence>
<proteinExistence type="evidence at protein level"/>